<gene>
    <name evidence="1" type="primary">caly</name>
    <name evidence="1" type="synonym">BAP1</name>
    <name type="ORF">GL10684</name>
</gene>
<dbReference type="EC" id="3.4.19.12" evidence="1"/>
<dbReference type="EMBL" id="CH479181">
    <property type="protein sequence ID" value="EDW31974.1"/>
    <property type="molecule type" value="Genomic_DNA"/>
</dbReference>
<dbReference type="SMR" id="B4GAM2"/>
<dbReference type="STRING" id="7234.B4GAM2"/>
<dbReference type="MEROPS" id="C12.A09"/>
<dbReference type="EnsemblMetazoa" id="FBtr0176299">
    <property type="protein sequence ID" value="FBpp0174791"/>
    <property type="gene ID" value="FBgn0148294"/>
</dbReference>
<dbReference type="EnsemblMetazoa" id="XM_002016048.2">
    <property type="protein sequence ID" value="XP_002016084.1"/>
    <property type="gene ID" value="LOC6590516"/>
</dbReference>
<dbReference type="GeneID" id="6590516"/>
<dbReference type="KEGG" id="dpe:6590516"/>
<dbReference type="CTD" id="136037741"/>
<dbReference type="eggNOG" id="KOG2778">
    <property type="taxonomic scope" value="Eukaryota"/>
</dbReference>
<dbReference type="HOGENOM" id="CLU_018316_2_1_1"/>
<dbReference type="OMA" id="MNHGCWE"/>
<dbReference type="OrthoDB" id="1924260at2759"/>
<dbReference type="PhylomeDB" id="B4GAM2"/>
<dbReference type="Proteomes" id="UP000008744">
    <property type="component" value="Unassembled WGS sequence"/>
</dbReference>
<dbReference type="GO" id="GO:0000785">
    <property type="term" value="C:chromatin"/>
    <property type="evidence" value="ECO:0000250"/>
    <property type="project" value="UniProtKB"/>
</dbReference>
<dbReference type="GO" id="GO:0005737">
    <property type="term" value="C:cytoplasm"/>
    <property type="evidence" value="ECO:0007669"/>
    <property type="project" value="TreeGrafter"/>
</dbReference>
<dbReference type="GO" id="GO:0035517">
    <property type="term" value="C:PR-DUB complex"/>
    <property type="evidence" value="ECO:0000250"/>
    <property type="project" value="UniProtKB"/>
</dbReference>
<dbReference type="GO" id="GO:0003682">
    <property type="term" value="F:chromatin binding"/>
    <property type="evidence" value="ECO:0000250"/>
    <property type="project" value="UniProtKB"/>
</dbReference>
<dbReference type="GO" id="GO:0004843">
    <property type="term" value="F:cysteine-type deubiquitinase activity"/>
    <property type="evidence" value="ECO:0000250"/>
    <property type="project" value="UniProtKB"/>
</dbReference>
<dbReference type="GO" id="GO:0040029">
    <property type="term" value="P:epigenetic regulation of gene expression"/>
    <property type="evidence" value="ECO:0000250"/>
    <property type="project" value="UniProtKB"/>
</dbReference>
<dbReference type="GO" id="GO:0031507">
    <property type="term" value="P:heterochromatin formation"/>
    <property type="evidence" value="ECO:0000250"/>
    <property type="project" value="UniProtKB"/>
</dbReference>
<dbReference type="GO" id="GO:0016579">
    <property type="term" value="P:protein deubiquitination"/>
    <property type="evidence" value="ECO:0007669"/>
    <property type="project" value="TreeGrafter"/>
</dbReference>
<dbReference type="GO" id="GO:0007385">
    <property type="term" value="P:specification of segmental identity, abdomen"/>
    <property type="evidence" value="ECO:0007669"/>
    <property type="project" value="EnsemblMetazoa"/>
</dbReference>
<dbReference type="GO" id="GO:0006511">
    <property type="term" value="P:ubiquitin-dependent protein catabolic process"/>
    <property type="evidence" value="ECO:0007669"/>
    <property type="project" value="InterPro"/>
</dbReference>
<dbReference type="CDD" id="cd09617">
    <property type="entry name" value="Peptidase_C12_UCH37_BAP1"/>
    <property type="match status" value="1"/>
</dbReference>
<dbReference type="FunFam" id="3.40.532.10:FF:000002">
    <property type="entry name" value="Ubiquitin carboxyl-terminal hydrolase"/>
    <property type="match status" value="1"/>
</dbReference>
<dbReference type="FunFam" id="1.20.58.860:FF:000004">
    <property type="entry name" value="Ubiquitin carboxyl-terminal hydrolase calypso"/>
    <property type="match status" value="1"/>
</dbReference>
<dbReference type="Gene3D" id="1.20.58.860">
    <property type="match status" value="1"/>
</dbReference>
<dbReference type="Gene3D" id="3.40.532.10">
    <property type="entry name" value="Peptidase C12, ubiquitin carboxyl-terminal hydrolase"/>
    <property type="match status" value="1"/>
</dbReference>
<dbReference type="InterPro" id="IPR038765">
    <property type="entry name" value="Papain-like_cys_pep_sf"/>
</dbReference>
<dbReference type="InterPro" id="IPR001578">
    <property type="entry name" value="Peptidase_C12_UCH"/>
</dbReference>
<dbReference type="InterPro" id="IPR036959">
    <property type="entry name" value="Peptidase_C12_UCH_sf"/>
</dbReference>
<dbReference type="InterPro" id="IPR041507">
    <property type="entry name" value="UCH_C"/>
</dbReference>
<dbReference type="PANTHER" id="PTHR10589">
    <property type="entry name" value="UBIQUITIN CARBOXYL-TERMINAL HYDROLASE"/>
    <property type="match status" value="1"/>
</dbReference>
<dbReference type="PANTHER" id="PTHR10589:SF28">
    <property type="entry name" value="UBIQUITIN CARBOXYL-TERMINAL HYDROLASE BAP1"/>
    <property type="match status" value="1"/>
</dbReference>
<dbReference type="Pfam" id="PF01088">
    <property type="entry name" value="Peptidase_C12"/>
    <property type="match status" value="1"/>
</dbReference>
<dbReference type="Pfam" id="PF18031">
    <property type="entry name" value="UCH_C"/>
    <property type="match status" value="1"/>
</dbReference>
<dbReference type="PRINTS" id="PR00707">
    <property type="entry name" value="UBCTHYDRLASE"/>
</dbReference>
<dbReference type="SUPFAM" id="SSF54001">
    <property type="entry name" value="Cysteine proteinases"/>
    <property type="match status" value="1"/>
</dbReference>
<dbReference type="PROSITE" id="PS52048">
    <property type="entry name" value="UCH_DOMAIN"/>
    <property type="match status" value="1"/>
</dbReference>
<dbReference type="PROSITE" id="PS52049">
    <property type="entry name" value="ULD"/>
    <property type="match status" value="1"/>
</dbReference>
<name>CALYP_DROPE</name>
<feature type="chain" id="PRO_0000395830" description="Ubiquitin carboxyl-terminal hydrolase calypso">
    <location>
        <begin position="1"/>
        <end position="475"/>
    </location>
</feature>
<feature type="domain" description="UCH catalytic" evidence="3">
    <location>
        <begin position="44"/>
        <end position="275"/>
    </location>
</feature>
<feature type="domain" description="ULD" evidence="4">
    <location>
        <begin position="374"/>
        <end position="402"/>
    </location>
</feature>
<feature type="region of interest" description="Positively charged C-terminal tail required for binding nucleosomes" evidence="1">
    <location>
        <begin position="404"/>
        <end position="475"/>
    </location>
</feature>
<feature type="region of interest" description="Disordered" evidence="5">
    <location>
        <begin position="411"/>
        <end position="475"/>
    </location>
</feature>
<feature type="coiled-coil region" evidence="2">
    <location>
        <begin position="333"/>
        <end position="360"/>
    </location>
</feature>
<feature type="compositionally biased region" description="Low complexity" evidence="5">
    <location>
        <begin position="419"/>
        <end position="460"/>
    </location>
</feature>
<feature type="compositionally biased region" description="Basic residues" evidence="5">
    <location>
        <begin position="461"/>
        <end position="475"/>
    </location>
</feature>
<feature type="active site" description="Nucleophile" evidence="3">
    <location>
        <position position="130"/>
    </location>
</feature>
<feature type="active site" description="Proton donor" evidence="3">
    <location>
        <position position="212"/>
    </location>
</feature>
<feature type="site" description="Transition state stabilizer" evidence="3">
    <location>
        <position position="124"/>
    </location>
</feature>
<feature type="site" description="Important for enzyme activity" evidence="3">
    <location>
        <position position="227"/>
    </location>
</feature>
<sequence>MNVAAGGPGTASASTTAANSIFNNSLLASATGATTMPMAQLADGWLELESDPGLFTLLLEDFGCHDVQVEEVYDLQKPIESPYGFIFLFRWIEERRARRKIVETTAEIFVKDEEAISSIFFAQQVVPNSCATHALLSVLLNCNENNLQLGDTLSRLKVHTKGMSPENKGLAIGNTPELACAHNSHAIPQARRRLERTGAGVASCRFTGEAFHFVSFVPISGQLFELDGLKPYPMNHGGWEDHEDWTDKFRRVMAERLGIATGEQDIRFNLMAVVPDRRIAITHKLKMLRTNQAIVSGTLQKLLKADEQGESGNGDQQRPDTPTTLLEPSAFTAKDLQLLLKNLDTEIAINEQNLADENDRRHMFKVDASRRTHNYDKFICTFLSMLAHQGVLGELVSQHLLPSKKVSGQSAANRISKQNSAASSAGANAGAAAGVTPKSQQQQQQPQTAASKNGKSPGKTPGRRRKGRNKCRKRK</sequence>
<reference key="1">
    <citation type="journal article" date="2007" name="Nature">
        <title>Evolution of genes and genomes on the Drosophila phylogeny.</title>
        <authorList>
            <consortium name="Drosophila 12 genomes consortium"/>
        </authorList>
    </citation>
    <scope>NUCLEOTIDE SEQUENCE [LARGE SCALE GENOMIC DNA]</scope>
    <source>
        <strain>MSH-3 / Tucson 14011-0111.49</strain>
    </source>
</reference>
<proteinExistence type="inferred from homology"/>
<accession>B4GAM2</accession>
<comment type="function">
    <text evidence="1">Catalytic component of the polycomb repressive deubiquitinase (PR-DUB) complex, a complex that specifically mediates deubiquitination of histone H2A monoubiquitinated at 'Lys-119' (H2AK118ub1). Mediates bisymmetric organization of the PR-DUB complex and is involved in association with nucleosomes to mediate deubiquitination. Does not deubiquitinate monoubiquitinated histone H2B. Required to maintain the transcriptionally repressive state of homeotic genes throughout development. The PR-DUB complex has weak or no activity toward 'Lys-48'- and 'Lys-63'-linked polyubiquitin chains. Polycomb group (PcG) protein.</text>
</comment>
<comment type="catalytic activity">
    <reaction evidence="1">
        <text>Thiol-dependent hydrolysis of ester, thioester, amide, peptide and isopeptide bonds formed by the C-terminal Gly of ubiquitin (a 76-residue protein attached to proteins as an intracellular targeting signal).</text>
        <dbReference type="EC" id="3.4.19.12"/>
    </reaction>
</comment>
<comment type="subunit">
    <text evidence="1">Catalytic component of the polycomb repressive deubiquitinase (PR-DUB) complex, at least composed of caly/calypso, Asx and sba (MBD5/6 homolog). The PR-DUB complex associates with nucleosomes to mediate deubiquitination of histone H2AK118ub1 substrates; the association requires the positively charged C-terminal tail of caly, probably due to direct binding of DNA. Interacts (via ULD domain) with Asx (via DEUBAD domain); the interaction produces a stable heterodimer with a composite binding site for ubiquitin. Homodimerizes (via coiled-coil hinge-region between the UCH and ULD domains) to mediate assembly of 2 copies of the caly-Asx heterodimer into a bisymmetric tetramer; dimerization enhances PR-DUB association with nucleosomes.</text>
</comment>
<comment type="subcellular location">
    <subcellularLocation>
        <location evidence="1">Nucleus</location>
    </subcellularLocation>
    <text evidence="1">Localizes to PcG response elements (PREs).</text>
</comment>
<comment type="similarity">
    <text evidence="6">Belongs to the peptidase C12 family. BAP1 subfamily.</text>
</comment>
<evidence type="ECO:0000250" key="1">
    <source>
        <dbReference type="UniProtKB" id="Q7K5N4"/>
    </source>
</evidence>
<evidence type="ECO:0000255" key="2"/>
<evidence type="ECO:0000255" key="3">
    <source>
        <dbReference type="PROSITE-ProRule" id="PRU01393"/>
    </source>
</evidence>
<evidence type="ECO:0000255" key="4">
    <source>
        <dbReference type="PROSITE-ProRule" id="PRU01394"/>
    </source>
</evidence>
<evidence type="ECO:0000256" key="5">
    <source>
        <dbReference type="SAM" id="MobiDB-lite"/>
    </source>
</evidence>
<evidence type="ECO:0000305" key="6"/>
<keyword id="KW-0156">Chromatin regulator</keyword>
<keyword id="KW-0175">Coiled coil</keyword>
<keyword id="KW-0378">Hydrolase</keyword>
<keyword id="KW-0539">Nucleus</keyword>
<keyword id="KW-0645">Protease</keyword>
<keyword id="KW-1185">Reference proteome</keyword>
<keyword id="KW-0788">Thiol protease</keyword>
<keyword id="KW-0833">Ubl conjugation pathway</keyword>
<organism>
    <name type="scientific">Drosophila persimilis</name>
    <name type="common">Fruit fly</name>
    <dbReference type="NCBI Taxonomy" id="7234"/>
    <lineage>
        <taxon>Eukaryota</taxon>
        <taxon>Metazoa</taxon>
        <taxon>Ecdysozoa</taxon>
        <taxon>Arthropoda</taxon>
        <taxon>Hexapoda</taxon>
        <taxon>Insecta</taxon>
        <taxon>Pterygota</taxon>
        <taxon>Neoptera</taxon>
        <taxon>Endopterygota</taxon>
        <taxon>Diptera</taxon>
        <taxon>Brachycera</taxon>
        <taxon>Muscomorpha</taxon>
        <taxon>Ephydroidea</taxon>
        <taxon>Drosophilidae</taxon>
        <taxon>Drosophila</taxon>
        <taxon>Sophophora</taxon>
    </lineage>
</organism>
<protein>
    <recommendedName>
        <fullName evidence="1">Ubiquitin carboxyl-terminal hydrolase calypso</fullName>
        <ecNumber evidence="1">3.4.19.12</ecNumber>
    </recommendedName>
    <alternativeName>
        <fullName evidence="1">BRCA1-associated protein 1 homolog</fullName>
        <shortName evidence="1">BAP1 homolog</shortName>
    </alternativeName>
    <alternativeName>
        <fullName evidence="1">Polycomb group protein calypso</fullName>
    </alternativeName>
</protein>